<sequence length="257" mass="26831">MTVAVRVIPCLDVDAGRVVKGVNFQNLRDAGDPVELAATYDAQGADELTFLDVTASTGDRGTMIDVVTRTAEQIFIPLTVGGGVRTVEDVDRLLRAGADKVSVNTAAIARPEVLREMSERFGSQCIVLSVDARTVPDGQPDTPSGWEVTTHGGKRGTGIDAVEWAERGAELGVGEILLNSMDADGTKTGFDLPMIRAVRAAVSIPVIASGGAGAVEHFAPAVQAGADAVLAASVFHFGDLTIGQVKDSLRDAHLVVR</sequence>
<feature type="chain" id="PRO_0000142192" description="Imidazole glycerol phosphate synthase subunit HisF">
    <location>
        <begin position="1"/>
        <end position="257"/>
    </location>
</feature>
<feature type="active site" evidence="1">
    <location>
        <position position="12"/>
    </location>
</feature>
<feature type="active site" evidence="1">
    <location>
        <position position="131"/>
    </location>
</feature>
<name>HIS6_NOCFA</name>
<proteinExistence type="inferred from homology"/>
<reference key="1">
    <citation type="journal article" date="2004" name="Proc. Natl. Acad. Sci. U.S.A.">
        <title>The complete genomic sequence of Nocardia farcinica IFM 10152.</title>
        <authorList>
            <person name="Ishikawa J."/>
            <person name="Yamashita A."/>
            <person name="Mikami Y."/>
            <person name="Hoshino Y."/>
            <person name="Kurita H."/>
            <person name="Hotta K."/>
            <person name="Shiba T."/>
            <person name="Hattori M."/>
        </authorList>
    </citation>
    <scope>NUCLEOTIDE SEQUENCE [LARGE SCALE GENOMIC DNA]</scope>
    <source>
        <strain>IFM 10152</strain>
    </source>
</reference>
<protein>
    <recommendedName>
        <fullName evidence="1">Imidazole glycerol phosphate synthase subunit HisF</fullName>
        <ecNumber evidence="1">4.3.2.10</ecNumber>
    </recommendedName>
    <alternativeName>
        <fullName evidence="1">IGP synthase cyclase subunit</fullName>
    </alternativeName>
    <alternativeName>
        <fullName evidence="1">IGP synthase subunit HisF</fullName>
    </alternativeName>
    <alternativeName>
        <fullName evidence="1">ImGP synthase subunit HisF</fullName>
        <shortName evidence="1">IGPS subunit HisF</shortName>
    </alternativeName>
</protein>
<organism>
    <name type="scientific">Nocardia farcinica (strain IFM 10152)</name>
    <dbReference type="NCBI Taxonomy" id="247156"/>
    <lineage>
        <taxon>Bacteria</taxon>
        <taxon>Bacillati</taxon>
        <taxon>Actinomycetota</taxon>
        <taxon>Actinomycetes</taxon>
        <taxon>Mycobacteriales</taxon>
        <taxon>Nocardiaceae</taxon>
        <taxon>Nocardia</taxon>
    </lineage>
</organism>
<accession>Q5YYP3</accession>
<evidence type="ECO:0000255" key="1">
    <source>
        <dbReference type="HAMAP-Rule" id="MF_01013"/>
    </source>
</evidence>
<keyword id="KW-0028">Amino-acid biosynthesis</keyword>
<keyword id="KW-0963">Cytoplasm</keyword>
<keyword id="KW-0368">Histidine biosynthesis</keyword>
<keyword id="KW-0456">Lyase</keyword>
<keyword id="KW-1185">Reference proteome</keyword>
<gene>
    <name evidence="1" type="primary">hisF</name>
    <name type="ordered locus">NFA_18520</name>
</gene>
<comment type="function">
    <text evidence="1">IGPS catalyzes the conversion of PRFAR and glutamine to IGP, AICAR and glutamate. The HisF subunit catalyzes the cyclization activity that produces IGP and AICAR from PRFAR using the ammonia provided by the HisH subunit.</text>
</comment>
<comment type="catalytic activity">
    <reaction evidence="1">
        <text>5-[(5-phospho-1-deoxy-D-ribulos-1-ylimino)methylamino]-1-(5-phospho-beta-D-ribosyl)imidazole-4-carboxamide + L-glutamine = D-erythro-1-(imidazol-4-yl)glycerol 3-phosphate + 5-amino-1-(5-phospho-beta-D-ribosyl)imidazole-4-carboxamide + L-glutamate + H(+)</text>
        <dbReference type="Rhea" id="RHEA:24793"/>
        <dbReference type="ChEBI" id="CHEBI:15378"/>
        <dbReference type="ChEBI" id="CHEBI:29985"/>
        <dbReference type="ChEBI" id="CHEBI:58278"/>
        <dbReference type="ChEBI" id="CHEBI:58359"/>
        <dbReference type="ChEBI" id="CHEBI:58475"/>
        <dbReference type="ChEBI" id="CHEBI:58525"/>
        <dbReference type="EC" id="4.3.2.10"/>
    </reaction>
</comment>
<comment type="pathway">
    <text evidence="1">Amino-acid biosynthesis; L-histidine biosynthesis; L-histidine from 5-phospho-alpha-D-ribose 1-diphosphate: step 5/9.</text>
</comment>
<comment type="subunit">
    <text evidence="1">Heterodimer of HisH and HisF.</text>
</comment>
<comment type="subcellular location">
    <subcellularLocation>
        <location evidence="1">Cytoplasm</location>
    </subcellularLocation>
</comment>
<comment type="similarity">
    <text evidence="1">Belongs to the HisA/HisF family.</text>
</comment>
<dbReference type="EC" id="4.3.2.10" evidence="1"/>
<dbReference type="EMBL" id="AP006618">
    <property type="protein sequence ID" value="BAD56698.1"/>
    <property type="molecule type" value="Genomic_DNA"/>
</dbReference>
<dbReference type="RefSeq" id="WP_011208383.1">
    <property type="nucleotide sequence ID" value="NC_006361.1"/>
</dbReference>
<dbReference type="SMR" id="Q5YYP3"/>
<dbReference type="STRING" id="247156.NFA_18520"/>
<dbReference type="GeneID" id="61132636"/>
<dbReference type="KEGG" id="nfa:NFA_18520"/>
<dbReference type="eggNOG" id="COG0107">
    <property type="taxonomic scope" value="Bacteria"/>
</dbReference>
<dbReference type="HOGENOM" id="CLU_048577_4_0_11"/>
<dbReference type="OrthoDB" id="9781903at2"/>
<dbReference type="UniPathway" id="UPA00031">
    <property type="reaction ID" value="UER00010"/>
</dbReference>
<dbReference type="Proteomes" id="UP000006820">
    <property type="component" value="Chromosome"/>
</dbReference>
<dbReference type="GO" id="GO:0005737">
    <property type="term" value="C:cytoplasm"/>
    <property type="evidence" value="ECO:0007669"/>
    <property type="project" value="UniProtKB-SubCell"/>
</dbReference>
<dbReference type="GO" id="GO:0000107">
    <property type="term" value="F:imidazoleglycerol-phosphate synthase activity"/>
    <property type="evidence" value="ECO:0007669"/>
    <property type="project" value="UniProtKB-UniRule"/>
</dbReference>
<dbReference type="GO" id="GO:0016829">
    <property type="term" value="F:lyase activity"/>
    <property type="evidence" value="ECO:0007669"/>
    <property type="project" value="UniProtKB-KW"/>
</dbReference>
<dbReference type="GO" id="GO:0000105">
    <property type="term" value="P:L-histidine biosynthetic process"/>
    <property type="evidence" value="ECO:0007669"/>
    <property type="project" value="UniProtKB-UniRule"/>
</dbReference>
<dbReference type="CDD" id="cd04731">
    <property type="entry name" value="HisF"/>
    <property type="match status" value="1"/>
</dbReference>
<dbReference type="FunFam" id="3.20.20.70:FF:000006">
    <property type="entry name" value="Imidazole glycerol phosphate synthase subunit HisF"/>
    <property type="match status" value="1"/>
</dbReference>
<dbReference type="Gene3D" id="3.20.20.70">
    <property type="entry name" value="Aldolase class I"/>
    <property type="match status" value="1"/>
</dbReference>
<dbReference type="HAMAP" id="MF_01013">
    <property type="entry name" value="HisF"/>
    <property type="match status" value="1"/>
</dbReference>
<dbReference type="InterPro" id="IPR013785">
    <property type="entry name" value="Aldolase_TIM"/>
</dbReference>
<dbReference type="InterPro" id="IPR006062">
    <property type="entry name" value="His_biosynth"/>
</dbReference>
<dbReference type="InterPro" id="IPR004651">
    <property type="entry name" value="HisF"/>
</dbReference>
<dbReference type="InterPro" id="IPR050064">
    <property type="entry name" value="IGPS_HisA/HisF"/>
</dbReference>
<dbReference type="InterPro" id="IPR011060">
    <property type="entry name" value="RibuloseP-bd_barrel"/>
</dbReference>
<dbReference type="NCBIfam" id="TIGR00735">
    <property type="entry name" value="hisF"/>
    <property type="match status" value="1"/>
</dbReference>
<dbReference type="PANTHER" id="PTHR21235:SF2">
    <property type="entry name" value="IMIDAZOLE GLYCEROL PHOSPHATE SYNTHASE HISHF"/>
    <property type="match status" value="1"/>
</dbReference>
<dbReference type="PANTHER" id="PTHR21235">
    <property type="entry name" value="IMIDAZOLE GLYCEROL PHOSPHATE SYNTHASE SUBUNIT HISF/H IGP SYNTHASE SUBUNIT HISF/H"/>
    <property type="match status" value="1"/>
</dbReference>
<dbReference type="Pfam" id="PF00977">
    <property type="entry name" value="His_biosynth"/>
    <property type="match status" value="1"/>
</dbReference>
<dbReference type="SUPFAM" id="SSF51366">
    <property type="entry name" value="Ribulose-phoshate binding barrel"/>
    <property type="match status" value="1"/>
</dbReference>